<gene>
    <name evidence="1" type="primary">mntP</name>
    <name type="synonym">yebN</name>
    <name type="ordered locus">SbBS512_E2088</name>
</gene>
<protein>
    <recommendedName>
        <fullName evidence="1">Probable manganese efflux pump MntP</fullName>
    </recommendedName>
</protein>
<proteinExistence type="inferred from homology"/>
<reference key="1">
    <citation type="submission" date="2008-05" db="EMBL/GenBank/DDBJ databases">
        <title>Complete sequence of Shigella boydii serotype 18 strain BS512.</title>
        <authorList>
            <person name="Rasko D.A."/>
            <person name="Rosovitz M."/>
            <person name="Maurelli A.T."/>
            <person name="Myers G."/>
            <person name="Seshadri R."/>
            <person name="Cer R."/>
            <person name="Jiang L."/>
            <person name="Ravel J."/>
            <person name="Sebastian Y."/>
        </authorList>
    </citation>
    <scope>NUCLEOTIDE SEQUENCE [LARGE SCALE GENOMIC DNA]</scope>
    <source>
        <strain>CDC 3083-94 / BS512</strain>
    </source>
</reference>
<sequence>MNITATVLLAFGMSMDAFAASIGKGATLHKPKFSEALRTGLIFGAVETLTPLIGWGMGMLASRFVLEWNHWIAFVLLIFLGGRMIIEGFRGADDEDEEPRRRHGFWLLVTTAIATSLDAMAVGVGLAFLQVNIIATALAIGCATLIMSTLGMMVGRFIGSIIGKKAEILGGLVLIGIGVQILWTHFHG</sequence>
<evidence type="ECO:0000255" key="1">
    <source>
        <dbReference type="HAMAP-Rule" id="MF_01521"/>
    </source>
</evidence>
<accession>B2U461</accession>
<keyword id="KW-0997">Cell inner membrane</keyword>
<keyword id="KW-1003">Cell membrane</keyword>
<keyword id="KW-0406">Ion transport</keyword>
<keyword id="KW-0464">Manganese</keyword>
<keyword id="KW-0472">Membrane</keyword>
<keyword id="KW-1185">Reference proteome</keyword>
<keyword id="KW-0812">Transmembrane</keyword>
<keyword id="KW-1133">Transmembrane helix</keyword>
<keyword id="KW-0813">Transport</keyword>
<feature type="chain" id="PRO_1000200042" description="Probable manganese efflux pump MntP">
    <location>
        <begin position="1"/>
        <end position="188"/>
    </location>
</feature>
<feature type="transmembrane region" description="Helical" evidence="1">
    <location>
        <begin position="3"/>
        <end position="23"/>
    </location>
</feature>
<feature type="transmembrane region" description="Helical" evidence="1">
    <location>
        <begin position="66"/>
        <end position="86"/>
    </location>
</feature>
<feature type="transmembrane region" description="Helical" evidence="1">
    <location>
        <begin position="106"/>
        <end position="128"/>
    </location>
</feature>
<feature type="transmembrane region" description="Helical" evidence="1">
    <location>
        <begin position="143"/>
        <end position="163"/>
    </location>
</feature>
<feature type="transmembrane region" description="Helical" evidence="1">
    <location>
        <begin position="168"/>
        <end position="188"/>
    </location>
</feature>
<comment type="function">
    <text evidence="1">Probably functions as a manganese efflux pump.</text>
</comment>
<comment type="subcellular location">
    <subcellularLocation>
        <location evidence="1">Cell inner membrane</location>
        <topology evidence="1">Multi-pass membrane protein</topology>
    </subcellularLocation>
</comment>
<comment type="similarity">
    <text evidence="1">Belongs to the MntP (TC 9.B.29) family.</text>
</comment>
<name>MNTP_SHIB3</name>
<organism>
    <name type="scientific">Shigella boydii serotype 18 (strain CDC 3083-94 / BS512)</name>
    <dbReference type="NCBI Taxonomy" id="344609"/>
    <lineage>
        <taxon>Bacteria</taxon>
        <taxon>Pseudomonadati</taxon>
        <taxon>Pseudomonadota</taxon>
        <taxon>Gammaproteobacteria</taxon>
        <taxon>Enterobacterales</taxon>
        <taxon>Enterobacteriaceae</taxon>
        <taxon>Shigella</taxon>
    </lineage>
</organism>
<dbReference type="EMBL" id="CP001063">
    <property type="protein sequence ID" value="ACD07240.1"/>
    <property type="molecule type" value="Genomic_DNA"/>
</dbReference>
<dbReference type="RefSeq" id="WP_001296134.1">
    <property type="nucleotide sequence ID" value="NC_010658.1"/>
</dbReference>
<dbReference type="GeneID" id="93776070"/>
<dbReference type="KEGG" id="sbc:SbBS512_E2088"/>
<dbReference type="HOGENOM" id="CLU_096410_0_0_6"/>
<dbReference type="Proteomes" id="UP000001030">
    <property type="component" value="Chromosome"/>
</dbReference>
<dbReference type="GO" id="GO:0005886">
    <property type="term" value="C:plasma membrane"/>
    <property type="evidence" value="ECO:0007669"/>
    <property type="project" value="UniProtKB-SubCell"/>
</dbReference>
<dbReference type="GO" id="GO:0005384">
    <property type="term" value="F:manganese ion transmembrane transporter activity"/>
    <property type="evidence" value="ECO:0007669"/>
    <property type="project" value="UniProtKB-UniRule"/>
</dbReference>
<dbReference type="HAMAP" id="MF_01521">
    <property type="entry name" value="MntP_pump"/>
    <property type="match status" value="1"/>
</dbReference>
<dbReference type="InterPro" id="IPR003810">
    <property type="entry name" value="Mntp/YtaF"/>
</dbReference>
<dbReference type="InterPro" id="IPR022929">
    <property type="entry name" value="Put_MntP"/>
</dbReference>
<dbReference type="NCBIfam" id="NF008546">
    <property type="entry name" value="PRK11469.1"/>
    <property type="match status" value="1"/>
</dbReference>
<dbReference type="PANTHER" id="PTHR35529">
    <property type="entry name" value="MANGANESE EFFLUX PUMP MNTP-RELATED"/>
    <property type="match status" value="1"/>
</dbReference>
<dbReference type="PANTHER" id="PTHR35529:SF1">
    <property type="entry name" value="MANGANESE EFFLUX PUMP MNTP-RELATED"/>
    <property type="match status" value="1"/>
</dbReference>
<dbReference type="Pfam" id="PF02659">
    <property type="entry name" value="Mntp"/>
    <property type="match status" value="1"/>
</dbReference>